<feature type="chain" id="PRO_1000191178" description="Homoserine O-acetyltransferase">
    <location>
        <begin position="1"/>
        <end position="308"/>
    </location>
</feature>
<feature type="active site" description="Acyl-thioester intermediate" evidence="1">
    <location>
        <position position="142"/>
    </location>
</feature>
<feature type="active site" description="Proton acceptor" evidence="1">
    <location>
        <position position="235"/>
    </location>
</feature>
<feature type="active site" evidence="1">
    <location>
        <position position="237"/>
    </location>
</feature>
<feature type="binding site" evidence="1">
    <location>
        <position position="163"/>
    </location>
    <ligand>
        <name>substrate</name>
    </ligand>
</feature>
<feature type="binding site" evidence="1">
    <location>
        <position position="192"/>
    </location>
    <ligand>
        <name>substrate</name>
    </ligand>
</feature>
<feature type="binding site" evidence="1">
    <location>
        <position position="249"/>
    </location>
    <ligand>
        <name>substrate</name>
    </ligand>
</feature>
<feature type="site" description="Important for acyl-CoA specificity" evidence="1">
    <location>
        <position position="111"/>
    </location>
</feature>
<feature type="site" description="Important for substrate specificity" evidence="1">
    <location>
        <position position="192"/>
    </location>
</feature>
<evidence type="ECO:0000255" key="1">
    <source>
        <dbReference type="HAMAP-Rule" id="MF_00295"/>
    </source>
</evidence>
<organism>
    <name type="scientific">Rhizobium rhizogenes (strain K84 / ATCC BAA-868)</name>
    <name type="common">Agrobacterium radiobacter</name>
    <dbReference type="NCBI Taxonomy" id="311403"/>
    <lineage>
        <taxon>Bacteria</taxon>
        <taxon>Pseudomonadati</taxon>
        <taxon>Pseudomonadota</taxon>
        <taxon>Alphaproteobacteria</taxon>
        <taxon>Hyphomicrobiales</taxon>
        <taxon>Rhizobiaceae</taxon>
        <taxon>Rhizobium/Agrobacterium group</taxon>
        <taxon>Rhizobium</taxon>
    </lineage>
</organism>
<comment type="function">
    <text evidence="1">Transfers an acetyl group from acetyl-CoA to L-homoserine, forming acetyl-L-homoserine.</text>
</comment>
<comment type="catalytic activity">
    <reaction evidence="1">
        <text>L-homoserine + acetyl-CoA = O-acetyl-L-homoserine + CoA</text>
        <dbReference type="Rhea" id="RHEA:13701"/>
        <dbReference type="ChEBI" id="CHEBI:57287"/>
        <dbReference type="ChEBI" id="CHEBI:57288"/>
        <dbReference type="ChEBI" id="CHEBI:57476"/>
        <dbReference type="ChEBI" id="CHEBI:57716"/>
        <dbReference type="EC" id="2.3.1.31"/>
    </reaction>
</comment>
<comment type="pathway">
    <text evidence="1">Amino-acid biosynthesis; L-methionine biosynthesis via de novo pathway; O-acetyl-L-homoserine from L-homoserine: step 1/1.</text>
</comment>
<comment type="subcellular location">
    <subcellularLocation>
        <location evidence="1">Cytoplasm</location>
    </subcellularLocation>
</comment>
<comment type="similarity">
    <text evidence="1">Belongs to the MetA family.</text>
</comment>
<accession>B9JDI5</accession>
<gene>
    <name evidence="1" type="primary">metAA</name>
    <name type="ordered locus">Arad_4643</name>
</gene>
<name>METAA_RHIR8</name>
<keyword id="KW-0012">Acyltransferase</keyword>
<keyword id="KW-0028">Amino-acid biosynthesis</keyword>
<keyword id="KW-0963">Cytoplasm</keyword>
<keyword id="KW-0486">Methionine biosynthesis</keyword>
<keyword id="KW-0808">Transferase</keyword>
<proteinExistence type="inferred from homology"/>
<dbReference type="EC" id="2.3.1.31" evidence="1"/>
<dbReference type="EMBL" id="CP000628">
    <property type="protein sequence ID" value="ACM28314.1"/>
    <property type="molecule type" value="Genomic_DNA"/>
</dbReference>
<dbReference type="RefSeq" id="WP_012652849.1">
    <property type="nucleotide sequence ID" value="NC_011985.1"/>
</dbReference>
<dbReference type="SMR" id="B9JDI5"/>
<dbReference type="STRING" id="311403.Arad_4643"/>
<dbReference type="KEGG" id="ara:Arad_4643"/>
<dbReference type="eggNOG" id="COG1897">
    <property type="taxonomic scope" value="Bacteria"/>
</dbReference>
<dbReference type="HOGENOM" id="CLU_057851_0_1_5"/>
<dbReference type="UniPathway" id="UPA00051">
    <property type="reaction ID" value="UER00074"/>
</dbReference>
<dbReference type="Proteomes" id="UP000001600">
    <property type="component" value="Chromosome 1"/>
</dbReference>
<dbReference type="GO" id="GO:0005737">
    <property type="term" value="C:cytoplasm"/>
    <property type="evidence" value="ECO:0007669"/>
    <property type="project" value="UniProtKB-SubCell"/>
</dbReference>
<dbReference type="GO" id="GO:0004414">
    <property type="term" value="F:homoserine O-acetyltransferase activity"/>
    <property type="evidence" value="ECO:0007669"/>
    <property type="project" value="UniProtKB-EC"/>
</dbReference>
<dbReference type="GO" id="GO:0008899">
    <property type="term" value="F:homoserine O-succinyltransferase activity"/>
    <property type="evidence" value="ECO:0007669"/>
    <property type="project" value="UniProtKB-UniRule"/>
</dbReference>
<dbReference type="GO" id="GO:0019281">
    <property type="term" value="P:L-methionine biosynthetic process from homoserine via O-succinyl-L-homoserine and cystathionine"/>
    <property type="evidence" value="ECO:0007669"/>
    <property type="project" value="InterPro"/>
</dbReference>
<dbReference type="CDD" id="cd03131">
    <property type="entry name" value="GATase1_HTS"/>
    <property type="match status" value="1"/>
</dbReference>
<dbReference type="Gene3D" id="3.40.50.880">
    <property type="match status" value="1"/>
</dbReference>
<dbReference type="HAMAP" id="MF_00295">
    <property type="entry name" value="MetA_acyltransf"/>
    <property type="match status" value="1"/>
</dbReference>
<dbReference type="InterPro" id="IPR029062">
    <property type="entry name" value="Class_I_gatase-like"/>
</dbReference>
<dbReference type="InterPro" id="IPR005697">
    <property type="entry name" value="HST_MetA"/>
</dbReference>
<dbReference type="InterPro" id="IPR033752">
    <property type="entry name" value="MetA_family"/>
</dbReference>
<dbReference type="NCBIfam" id="TIGR01001">
    <property type="entry name" value="metA"/>
    <property type="match status" value="1"/>
</dbReference>
<dbReference type="PANTHER" id="PTHR20919">
    <property type="entry name" value="HOMOSERINE O-SUCCINYLTRANSFERASE"/>
    <property type="match status" value="1"/>
</dbReference>
<dbReference type="PANTHER" id="PTHR20919:SF0">
    <property type="entry name" value="HOMOSERINE O-SUCCINYLTRANSFERASE"/>
    <property type="match status" value="1"/>
</dbReference>
<dbReference type="Pfam" id="PF04204">
    <property type="entry name" value="HTS"/>
    <property type="match status" value="1"/>
</dbReference>
<dbReference type="PIRSF" id="PIRSF000450">
    <property type="entry name" value="H_ser_succinyltr"/>
    <property type="match status" value="1"/>
</dbReference>
<dbReference type="SUPFAM" id="SSF52317">
    <property type="entry name" value="Class I glutamine amidotransferase-like"/>
    <property type="match status" value="1"/>
</dbReference>
<sequence length="308" mass="35770">MPIKIPDTLPAFEALQNEGVRVMTETMAIRQDIRPLQIGLLNLMPNKIKTEVQMARLVGASPLQVEFSLVRVGGHKAKNTSEEHLLSFYQTWEEVKHRKFDGFIITGAPIELLEYEDVTYWDEMKQILDWTTTNVHSTLNVCWGAMAAIYHFHGVPKYTLKEKAFGVYRHQNLKPSSVYLNGFSDDFAVPVSRWTEVRRADIEKVPNLEILMESSEMGVCLVHEQACNRLYMFNHVEYDSTSLADEYFRDVHAGVPIKMPHNYFPHNDPEIPPQNRWRSHAHLFFGNWINELYQTTPYDLEDIGEERL</sequence>
<reference key="1">
    <citation type="journal article" date="2009" name="J. Bacteriol.">
        <title>Genome sequences of three Agrobacterium biovars help elucidate the evolution of multichromosome genomes in bacteria.</title>
        <authorList>
            <person name="Slater S.C."/>
            <person name="Goldman B.S."/>
            <person name="Goodner B."/>
            <person name="Setubal J.C."/>
            <person name="Farrand S.K."/>
            <person name="Nester E.W."/>
            <person name="Burr T.J."/>
            <person name="Banta L."/>
            <person name="Dickerman A.W."/>
            <person name="Paulsen I."/>
            <person name="Otten L."/>
            <person name="Suen G."/>
            <person name="Welch R."/>
            <person name="Almeida N.F."/>
            <person name="Arnold F."/>
            <person name="Burton O.T."/>
            <person name="Du Z."/>
            <person name="Ewing A."/>
            <person name="Godsy E."/>
            <person name="Heisel S."/>
            <person name="Houmiel K.L."/>
            <person name="Jhaveri J."/>
            <person name="Lu J."/>
            <person name="Miller N.M."/>
            <person name="Norton S."/>
            <person name="Chen Q."/>
            <person name="Phoolcharoen W."/>
            <person name="Ohlin V."/>
            <person name="Ondrusek D."/>
            <person name="Pride N."/>
            <person name="Stricklin S.L."/>
            <person name="Sun J."/>
            <person name="Wheeler C."/>
            <person name="Wilson L."/>
            <person name="Zhu H."/>
            <person name="Wood D.W."/>
        </authorList>
    </citation>
    <scope>NUCLEOTIDE SEQUENCE [LARGE SCALE GENOMIC DNA]</scope>
    <source>
        <strain>K84 / ATCC BAA-868</strain>
    </source>
</reference>
<protein>
    <recommendedName>
        <fullName evidence="1">Homoserine O-acetyltransferase</fullName>
        <shortName evidence="1">HAT</shortName>
        <ecNumber evidence="1">2.3.1.31</ecNumber>
    </recommendedName>
    <alternativeName>
        <fullName evidence="1">Homoserine transacetylase</fullName>
        <shortName evidence="1">HTA</shortName>
    </alternativeName>
</protein>